<accession>P82417</accession>
<name>GTX3D_NEOGO</name>
<protein>
    <recommendedName>
        <fullName evidence="3">M-poneritoxin-Ng3d</fullName>
        <shortName evidence="3">M-PONTX-Ng3d</shortName>
    </recommendedName>
    <alternativeName>
        <fullName evidence="4">Poneratoxin</fullName>
    </alternativeName>
    <alternativeName>
        <fullName evidence="2">Ponericin-G4</fullName>
    </alternativeName>
</protein>
<evidence type="ECO:0000269" key="1">
    <source>
    </source>
</evidence>
<evidence type="ECO:0000303" key="2">
    <source>
    </source>
</evidence>
<evidence type="ECO:0000303" key="3">
    <source>
    </source>
</evidence>
<evidence type="ECO:0000305" key="4"/>
<evidence type="ECO:0000305" key="5">
    <source>
    </source>
</evidence>
<sequence length="29" mass="3165">DFKDWMKTAGEWLKKKGPGILKAAMAAAT</sequence>
<keyword id="KW-0044">Antibiotic</keyword>
<keyword id="KW-0929">Antimicrobial</keyword>
<keyword id="KW-0903">Direct protein sequencing</keyword>
<keyword id="KW-0295">Fungicide</keyword>
<keyword id="KW-0964">Secreted</keyword>
<organism>
    <name type="scientific">Neoponera goeldii</name>
    <name type="common">Ponerine ant</name>
    <name type="synonym">Pachycondyla goeldii</name>
    <dbReference type="NCBI Taxonomy" id="3057131"/>
    <lineage>
        <taxon>Eukaryota</taxon>
        <taxon>Metazoa</taxon>
        <taxon>Ecdysozoa</taxon>
        <taxon>Arthropoda</taxon>
        <taxon>Hexapoda</taxon>
        <taxon>Insecta</taxon>
        <taxon>Pterygota</taxon>
        <taxon>Neoptera</taxon>
        <taxon>Endopterygota</taxon>
        <taxon>Hymenoptera</taxon>
        <taxon>Apocrita</taxon>
        <taxon>Aculeata</taxon>
        <taxon>Formicoidea</taxon>
        <taxon>Formicidae</taxon>
        <taxon>Ponerinae</taxon>
        <taxon>Ponerini</taxon>
        <taxon>Neoponera</taxon>
    </lineage>
</organism>
<feature type="peptide" id="PRO_0000044188" description="M-poneritoxin-Ng3d" evidence="1">
    <location>
        <begin position="1"/>
        <end position="29"/>
    </location>
</feature>
<proteinExistence type="evidence at protein level"/>
<dbReference type="SMR" id="P82417"/>
<dbReference type="GO" id="GO:0005576">
    <property type="term" value="C:extracellular region"/>
    <property type="evidence" value="ECO:0007669"/>
    <property type="project" value="UniProtKB-SubCell"/>
</dbReference>
<dbReference type="GO" id="GO:0042742">
    <property type="term" value="P:defense response to bacterium"/>
    <property type="evidence" value="ECO:0007669"/>
    <property type="project" value="UniProtKB-KW"/>
</dbReference>
<dbReference type="GO" id="GO:0050832">
    <property type="term" value="P:defense response to fungus"/>
    <property type="evidence" value="ECO:0007669"/>
    <property type="project" value="UniProtKB-KW"/>
</dbReference>
<dbReference type="GO" id="GO:0031640">
    <property type="term" value="P:killing of cells of another organism"/>
    <property type="evidence" value="ECO:0007669"/>
    <property type="project" value="UniProtKB-KW"/>
</dbReference>
<dbReference type="InterPro" id="IPR010002">
    <property type="entry name" value="Poneritoxin"/>
</dbReference>
<dbReference type="Pfam" id="PF07442">
    <property type="entry name" value="Ponericin"/>
    <property type="match status" value="1"/>
</dbReference>
<comment type="function">
    <text evidence="1">Has activity against some Gram-positive bacteria and S.cerevisiae. Has a non-hemolytic activity.</text>
</comment>
<comment type="subcellular location">
    <subcellularLocation>
        <location evidence="1">Secreted</location>
    </subcellularLocation>
</comment>
<comment type="tissue specificity">
    <text evidence="5">Expressed by the venom gland.</text>
</comment>
<comment type="mass spectrometry" mass="3163.87" method="MALDI" evidence="1"/>
<comment type="similarity">
    <text evidence="4">Belongs to the ponericin-G family.</text>
</comment>
<reference key="1">
    <citation type="journal article" date="2001" name="J. Biol. Chem.">
        <title>Ponericins, new antibacterial and insecticidal peptides from the venom of the ant Pachycondyla goeldii.</title>
        <authorList>
            <person name="Orivel J."/>
            <person name="Redeker V."/>
            <person name="Le Caer J.-P."/>
            <person name="Krier F."/>
            <person name="Revol-Junelles A.-M."/>
            <person name="Longeon A."/>
            <person name="Chafotte A."/>
            <person name="Dejean A."/>
            <person name="Rossier J."/>
        </authorList>
    </citation>
    <scope>PROTEIN SEQUENCE</scope>
    <scope>FUNCTION</scope>
    <scope>MASS SPECTROMETRY</scope>
    <scope>SUBCELLULAR LOCATION</scope>
    <source>
        <tissue>Venom</tissue>
    </source>
</reference>
<reference key="2">
    <citation type="journal article" date="2016" name="Toxins">
        <title>The biochemical toxin arsenal from ant venoms.</title>
        <authorList>
            <person name="Touchard A."/>
            <person name="Aili S.R."/>
            <person name="Fox E.G."/>
            <person name="Escoubas P."/>
            <person name="Orivel J."/>
            <person name="Nicholson G.M."/>
            <person name="Dejean A."/>
        </authorList>
    </citation>
    <scope>REVIEW</scope>
    <scope>NOMENCLATURE</scope>
</reference>